<comment type="function">
    <text evidence="1">Catalyzes the stereoinversion of LL-2,6-diaminopimelate (L,L-DAP) to meso-diaminopimelate (meso-DAP), a precursor of L-lysine and an essential component of the bacterial peptidoglycan.</text>
</comment>
<comment type="catalytic activity">
    <reaction evidence="1">
        <text>(2S,6S)-2,6-diaminopimelate = meso-2,6-diaminopimelate</text>
        <dbReference type="Rhea" id="RHEA:15393"/>
        <dbReference type="ChEBI" id="CHEBI:57609"/>
        <dbReference type="ChEBI" id="CHEBI:57791"/>
        <dbReference type="EC" id="5.1.1.7"/>
    </reaction>
</comment>
<comment type="pathway">
    <text evidence="1">Amino-acid biosynthesis; L-lysine biosynthesis via DAP pathway; DL-2,6-diaminopimelate from LL-2,6-diaminopimelate: step 1/1.</text>
</comment>
<comment type="subunit">
    <text evidence="1">Homodimer.</text>
</comment>
<comment type="subcellular location">
    <subcellularLocation>
        <location evidence="1">Cytoplasm</location>
    </subcellularLocation>
</comment>
<comment type="similarity">
    <text evidence="1">Belongs to the diaminopimelate epimerase family.</text>
</comment>
<reference key="1">
    <citation type="journal article" date="2003" name="Proc. Natl. Acad. Sci. U.S.A.">
        <title>The complete genome sequence of the Arabidopsis and tomato pathogen Pseudomonas syringae pv. tomato DC3000.</title>
        <authorList>
            <person name="Buell C.R."/>
            <person name="Joardar V."/>
            <person name="Lindeberg M."/>
            <person name="Selengut J."/>
            <person name="Paulsen I.T."/>
            <person name="Gwinn M.L."/>
            <person name="Dodson R.J."/>
            <person name="DeBoy R.T."/>
            <person name="Durkin A.S."/>
            <person name="Kolonay J.F."/>
            <person name="Madupu R."/>
            <person name="Daugherty S.C."/>
            <person name="Brinkac L.M."/>
            <person name="Beanan M.J."/>
            <person name="Haft D.H."/>
            <person name="Nelson W.C."/>
            <person name="Davidsen T.M."/>
            <person name="Zafar N."/>
            <person name="Zhou L."/>
            <person name="Liu J."/>
            <person name="Yuan Q."/>
            <person name="Khouri H.M."/>
            <person name="Fedorova N.B."/>
            <person name="Tran B."/>
            <person name="Russell D."/>
            <person name="Berry K.J."/>
            <person name="Utterback T.R."/>
            <person name="Van Aken S.E."/>
            <person name="Feldblyum T.V."/>
            <person name="D'Ascenzo M."/>
            <person name="Deng W.-L."/>
            <person name="Ramos A.R."/>
            <person name="Alfano J.R."/>
            <person name="Cartinhour S."/>
            <person name="Chatterjee A.K."/>
            <person name="Delaney T.P."/>
            <person name="Lazarowitz S.G."/>
            <person name="Martin G.B."/>
            <person name="Schneider D.J."/>
            <person name="Tang X."/>
            <person name="Bender C.L."/>
            <person name="White O."/>
            <person name="Fraser C.M."/>
            <person name="Collmer A."/>
        </authorList>
    </citation>
    <scope>NUCLEOTIDE SEQUENCE [LARGE SCALE GENOMIC DNA]</scope>
    <source>
        <strain>ATCC BAA-871 / DC3000</strain>
    </source>
</reference>
<dbReference type="EC" id="5.1.1.7" evidence="1"/>
<dbReference type="EMBL" id="AE016853">
    <property type="protein sequence ID" value="AAO53770.1"/>
    <property type="molecule type" value="Genomic_DNA"/>
</dbReference>
<dbReference type="RefSeq" id="NP_790075.1">
    <property type="nucleotide sequence ID" value="NC_004578.1"/>
</dbReference>
<dbReference type="RefSeq" id="WP_011103038.1">
    <property type="nucleotide sequence ID" value="NC_004578.1"/>
</dbReference>
<dbReference type="SMR" id="Q88B09"/>
<dbReference type="STRING" id="223283.PSPTO_0224"/>
<dbReference type="GeneID" id="1181832"/>
<dbReference type="KEGG" id="pst:PSPTO_0224"/>
<dbReference type="PATRIC" id="fig|223283.9.peg.233"/>
<dbReference type="eggNOG" id="COG0253">
    <property type="taxonomic scope" value="Bacteria"/>
</dbReference>
<dbReference type="HOGENOM" id="CLU_053306_1_1_6"/>
<dbReference type="OrthoDB" id="9805408at2"/>
<dbReference type="PhylomeDB" id="Q88B09"/>
<dbReference type="UniPathway" id="UPA00034">
    <property type="reaction ID" value="UER00025"/>
</dbReference>
<dbReference type="Proteomes" id="UP000002515">
    <property type="component" value="Chromosome"/>
</dbReference>
<dbReference type="GO" id="GO:0005829">
    <property type="term" value="C:cytosol"/>
    <property type="evidence" value="ECO:0007669"/>
    <property type="project" value="TreeGrafter"/>
</dbReference>
<dbReference type="GO" id="GO:0008837">
    <property type="term" value="F:diaminopimelate epimerase activity"/>
    <property type="evidence" value="ECO:0007669"/>
    <property type="project" value="UniProtKB-UniRule"/>
</dbReference>
<dbReference type="GO" id="GO:0009089">
    <property type="term" value="P:lysine biosynthetic process via diaminopimelate"/>
    <property type="evidence" value="ECO:0007669"/>
    <property type="project" value="UniProtKB-UniRule"/>
</dbReference>
<dbReference type="FunFam" id="3.10.310.10:FF:000001">
    <property type="entry name" value="Diaminopimelate epimerase"/>
    <property type="match status" value="1"/>
</dbReference>
<dbReference type="FunFam" id="3.10.310.10:FF:000004">
    <property type="entry name" value="Diaminopimelate epimerase"/>
    <property type="match status" value="1"/>
</dbReference>
<dbReference type="Gene3D" id="3.10.310.10">
    <property type="entry name" value="Diaminopimelate Epimerase, Chain A, domain 1"/>
    <property type="match status" value="2"/>
</dbReference>
<dbReference type="HAMAP" id="MF_00197">
    <property type="entry name" value="DAP_epimerase"/>
    <property type="match status" value="1"/>
</dbReference>
<dbReference type="InterPro" id="IPR018510">
    <property type="entry name" value="DAP_epimerase_AS"/>
</dbReference>
<dbReference type="InterPro" id="IPR001653">
    <property type="entry name" value="DAP_epimerase_DapF"/>
</dbReference>
<dbReference type="NCBIfam" id="TIGR00652">
    <property type="entry name" value="DapF"/>
    <property type="match status" value="1"/>
</dbReference>
<dbReference type="PANTHER" id="PTHR31689:SF0">
    <property type="entry name" value="DIAMINOPIMELATE EPIMERASE"/>
    <property type="match status" value="1"/>
</dbReference>
<dbReference type="PANTHER" id="PTHR31689">
    <property type="entry name" value="DIAMINOPIMELATE EPIMERASE, CHLOROPLASTIC"/>
    <property type="match status" value="1"/>
</dbReference>
<dbReference type="Pfam" id="PF01678">
    <property type="entry name" value="DAP_epimerase"/>
    <property type="match status" value="2"/>
</dbReference>
<dbReference type="SUPFAM" id="SSF54506">
    <property type="entry name" value="Diaminopimelate epimerase-like"/>
    <property type="match status" value="1"/>
</dbReference>
<dbReference type="PROSITE" id="PS01326">
    <property type="entry name" value="DAP_EPIMERASE"/>
    <property type="match status" value="1"/>
</dbReference>
<name>DAPF_PSESM</name>
<organism>
    <name type="scientific">Pseudomonas syringae pv. tomato (strain ATCC BAA-871 / DC3000)</name>
    <dbReference type="NCBI Taxonomy" id="223283"/>
    <lineage>
        <taxon>Bacteria</taxon>
        <taxon>Pseudomonadati</taxon>
        <taxon>Pseudomonadota</taxon>
        <taxon>Gammaproteobacteria</taxon>
        <taxon>Pseudomonadales</taxon>
        <taxon>Pseudomonadaceae</taxon>
        <taxon>Pseudomonas</taxon>
    </lineage>
</organism>
<gene>
    <name evidence="1" type="primary">dapF</name>
    <name type="ordered locus">PSPTO_0224</name>
</gene>
<feature type="chain" id="PRO_0000149862" description="Diaminopimelate epimerase">
    <location>
        <begin position="1"/>
        <end position="276"/>
    </location>
</feature>
<feature type="active site" description="Proton donor" evidence="1">
    <location>
        <position position="75"/>
    </location>
</feature>
<feature type="active site" description="Proton acceptor" evidence="1">
    <location>
        <position position="219"/>
    </location>
</feature>
<feature type="binding site" evidence="1">
    <location>
        <position position="13"/>
    </location>
    <ligand>
        <name>substrate</name>
    </ligand>
</feature>
<feature type="binding site" evidence="1">
    <location>
        <position position="46"/>
    </location>
    <ligand>
        <name>substrate</name>
    </ligand>
</feature>
<feature type="binding site" evidence="1">
    <location>
        <position position="66"/>
    </location>
    <ligand>
        <name>substrate</name>
    </ligand>
</feature>
<feature type="binding site" evidence="1">
    <location>
        <begin position="76"/>
        <end position="77"/>
    </location>
    <ligand>
        <name>substrate</name>
    </ligand>
</feature>
<feature type="binding site" evidence="1">
    <location>
        <position position="159"/>
    </location>
    <ligand>
        <name>substrate</name>
    </ligand>
</feature>
<feature type="binding site" evidence="1">
    <location>
        <position position="192"/>
    </location>
    <ligand>
        <name>substrate</name>
    </ligand>
</feature>
<feature type="binding site" evidence="1">
    <location>
        <begin position="210"/>
        <end position="211"/>
    </location>
    <ligand>
        <name>substrate</name>
    </ligand>
</feature>
<feature type="binding site" evidence="1">
    <location>
        <begin position="220"/>
        <end position="221"/>
    </location>
    <ligand>
        <name>substrate</name>
    </ligand>
</feature>
<feature type="site" description="Could be important to modulate the pK values of the two catalytic cysteine residues" evidence="1">
    <location>
        <position position="161"/>
    </location>
</feature>
<feature type="site" description="Could be important to modulate the pK values of the two catalytic cysteine residues" evidence="1">
    <location>
        <position position="210"/>
    </location>
</feature>
<feature type="site" description="Important for dimerization" evidence="1">
    <location>
        <position position="270"/>
    </location>
</feature>
<accession>Q88B09</accession>
<proteinExistence type="inferred from homology"/>
<sequence>MLLRFTKMHGLGNDFMVLDLVSQHAHILPKHAKQWGDRHTGIGFDQLLLVEAPNNPDVDFRYRIFNSDGSEVEQCGNGARCFARFVLDKRLTAKKQIRVETKGGIIELEIRSDGQISVDMGPPRLVPEEIPFQAAEQAKSYSLDVDGQTVELAAVSMGNPHAVLRVDDINNAPVHTLGPKIEHHPRFPARVNVGFLHVVDRQRAQLRVWERGAGETQACGTGACAAAVAAISQGWMDSPLLIDLPGGRLSIEWAGPGHPVMMTGPATRVYEGQVRL</sequence>
<protein>
    <recommendedName>
        <fullName evidence="1">Diaminopimelate epimerase</fullName>
        <shortName evidence="1">DAP epimerase</shortName>
        <ecNumber evidence="1">5.1.1.7</ecNumber>
    </recommendedName>
    <alternativeName>
        <fullName evidence="1">PLP-independent amino acid racemase</fullName>
    </alternativeName>
</protein>
<evidence type="ECO:0000255" key="1">
    <source>
        <dbReference type="HAMAP-Rule" id="MF_00197"/>
    </source>
</evidence>
<keyword id="KW-0028">Amino-acid biosynthesis</keyword>
<keyword id="KW-0963">Cytoplasm</keyword>
<keyword id="KW-0413">Isomerase</keyword>
<keyword id="KW-0457">Lysine biosynthesis</keyword>
<keyword id="KW-1185">Reference proteome</keyword>